<feature type="chain" id="PRO_1000144500" description="Large ribosomal subunit protein bL17">
    <location>
        <begin position="1"/>
        <end position="133"/>
    </location>
</feature>
<organism>
    <name type="scientific">Thermodesulfovibrio yellowstonii (strain ATCC 51303 / DSM 11347 / YP87)</name>
    <dbReference type="NCBI Taxonomy" id="289376"/>
    <lineage>
        <taxon>Bacteria</taxon>
        <taxon>Pseudomonadati</taxon>
        <taxon>Nitrospirota</taxon>
        <taxon>Thermodesulfovibrionia</taxon>
        <taxon>Thermodesulfovibrionales</taxon>
        <taxon>Thermodesulfovibrionaceae</taxon>
        <taxon>Thermodesulfovibrio</taxon>
    </lineage>
</organism>
<keyword id="KW-1185">Reference proteome</keyword>
<keyword id="KW-0687">Ribonucleoprotein</keyword>
<keyword id="KW-0689">Ribosomal protein</keyword>
<gene>
    <name evidence="1" type="primary">rplQ</name>
    <name type="ordered locus">THEYE_A1420</name>
</gene>
<sequence length="133" mass="15240">MRHRVSGRHFGRTANQRKALLRGLLASLIKYERIETTVAKAKAVKELADRLVTFGKKGDLHSRRIALSYLPDRELVKKLFNEIAPRFSDRNGGYVRVIKTGFRIKDSAPKAILEFVDYAKPEKESDKEEKKAN</sequence>
<reference key="1">
    <citation type="submission" date="2008-08" db="EMBL/GenBank/DDBJ databases">
        <title>The complete genome sequence of Thermodesulfovibrio yellowstonii strain ATCC 51303 / DSM 11347 / YP87.</title>
        <authorList>
            <person name="Dodson R.J."/>
            <person name="Durkin A.S."/>
            <person name="Wu M."/>
            <person name="Eisen J."/>
            <person name="Sutton G."/>
        </authorList>
    </citation>
    <scope>NUCLEOTIDE SEQUENCE [LARGE SCALE GENOMIC DNA]</scope>
    <source>
        <strain>ATCC 51303 / DSM 11347 / YP87</strain>
    </source>
</reference>
<accession>B5YG21</accession>
<dbReference type="EMBL" id="CP001147">
    <property type="protein sequence ID" value="ACI20294.1"/>
    <property type="molecule type" value="Genomic_DNA"/>
</dbReference>
<dbReference type="RefSeq" id="WP_012545032.1">
    <property type="nucleotide sequence ID" value="NC_011296.1"/>
</dbReference>
<dbReference type="RefSeq" id="YP_002249219.1">
    <property type="nucleotide sequence ID" value="NC_011296.1"/>
</dbReference>
<dbReference type="SMR" id="B5YG21"/>
<dbReference type="FunCoup" id="B5YG21">
    <property type="interactions" value="521"/>
</dbReference>
<dbReference type="STRING" id="289376.THEYE_A1420"/>
<dbReference type="EnsemblBacteria" id="ACI20294">
    <property type="protein sequence ID" value="ACI20294"/>
    <property type="gene ID" value="THEYE_A1420"/>
</dbReference>
<dbReference type="KEGG" id="tye:THEYE_A1420"/>
<dbReference type="PATRIC" id="fig|289376.4.peg.1380"/>
<dbReference type="eggNOG" id="COG0203">
    <property type="taxonomic scope" value="Bacteria"/>
</dbReference>
<dbReference type="HOGENOM" id="CLU_074407_2_2_0"/>
<dbReference type="InParanoid" id="B5YG21"/>
<dbReference type="OrthoDB" id="9809073at2"/>
<dbReference type="Proteomes" id="UP000000718">
    <property type="component" value="Chromosome"/>
</dbReference>
<dbReference type="GO" id="GO:0022625">
    <property type="term" value="C:cytosolic large ribosomal subunit"/>
    <property type="evidence" value="ECO:0000318"/>
    <property type="project" value="GO_Central"/>
</dbReference>
<dbReference type="GO" id="GO:0003735">
    <property type="term" value="F:structural constituent of ribosome"/>
    <property type="evidence" value="ECO:0000318"/>
    <property type="project" value="GO_Central"/>
</dbReference>
<dbReference type="GO" id="GO:0006412">
    <property type="term" value="P:translation"/>
    <property type="evidence" value="ECO:0007669"/>
    <property type="project" value="UniProtKB-UniRule"/>
</dbReference>
<dbReference type="FunFam" id="3.90.1030.10:FF:000001">
    <property type="entry name" value="50S ribosomal protein L17"/>
    <property type="match status" value="1"/>
</dbReference>
<dbReference type="Gene3D" id="3.90.1030.10">
    <property type="entry name" value="Ribosomal protein L17"/>
    <property type="match status" value="1"/>
</dbReference>
<dbReference type="HAMAP" id="MF_01368">
    <property type="entry name" value="Ribosomal_bL17"/>
    <property type="match status" value="1"/>
</dbReference>
<dbReference type="InterPro" id="IPR000456">
    <property type="entry name" value="Ribosomal_bL17"/>
</dbReference>
<dbReference type="InterPro" id="IPR047859">
    <property type="entry name" value="Ribosomal_bL17_CS"/>
</dbReference>
<dbReference type="InterPro" id="IPR036373">
    <property type="entry name" value="Ribosomal_bL17_sf"/>
</dbReference>
<dbReference type="NCBIfam" id="TIGR00059">
    <property type="entry name" value="L17"/>
    <property type="match status" value="1"/>
</dbReference>
<dbReference type="PANTHER" id="PTHR14413:SF16">
    <property type="entry name" value="LARGE RIBOSOMAL SUBUNIT PROTEIN BL17M"/>
    <property type="match status" value="1"/>
</dbReference>
<dbReference type="PANTHER" id="PTHR14413">
    <property type="entry name" value="RIBOSOMAL PROTEIN L17"/>
    <property type="match status" value="1"/>
</dbReference>
<dbReference type="Pfam" id="PF01196">
    <property type="entry name" value="Ribosomal_L17"/>
    <property type="match status" value="1"/>
</dbReference>
<dbReference type="SUPFAM" id="SSF64263">
    <property type="entry name" value="Prokaryotic ribosomal protein L17"/>
    <property type="match status" value="1"/>
</dbReference>
<dbReference type="PROSITE" id="PS01167">
    <property type="entry name" value="RIBOSOMAL_L17"/>
    <property type="match status" value="1"/>
</dbReference>
<evidence type="ECO:0000255" key="1">
    <source>
        <dbReference type="HAMAP-Rule" id="MF_01368"/>
    </source>
</evidence>
<evidence type="ECO:0000305" key="2"/>
<comment type="subunit">
    <text evidence="1">Part of the 50S ribosomal subunit. Contacts protein L32.</text>
</comment>
<comment type="similarity">
    <text evidence="1">Belongs to the bacterial ribosomal protein bL17 family.</text>
</comment>
<proteinExistence type="inferred from homology"/>
<protein>
    <recommendedName>
        <fullName evidence="1">Large ribosomal subunit protein bL17</fullName>
    </recommendedName>
    <alternativeName>
        <fullName evidence="2">50S ribosomal protein L17</fullName>
    </alternativeName>
</protein>
<name>RL17_THEYD</name>